<protein>
    <recommendedName>
        <fullName evidence="1">tRNA pseudouridine synthase A</fullName>
        <ecNumber evidence="1">5.4.99.12</ecNumber>
    </recommendedName>
    <alternativeName>
        <fullName evidence="1">tRNA pseudouridine(38-40) synthase</fullName>
    </alternativeName>
    <alternativeName>
        <fullName evidence="1">tRNA pseudouridylate synthase I</fullName>
    </alternativeName>
    <alternativeName>
        <fullName evidence="1">tRNA-uridine isomerase I</fullName>
    </alternativeName>
</protein>
<proteinExistence type="inferred from homology"/>
<evidence type="ECO:0000255" key="1">
    <source>
        <dbReference type="HAMAP-Rule" id="MF_00171"/>
    </source>
</evidence>
<keyword id="KW-0413">Isomerase</keyword>
<keyword id="KW-0819">tRNA processing</keyword>
<feature type="chain" id="PRO_1000017040" description="tRNA pseudouridine synthase A">
    <location>
        <begin position="1"/>
        <end position="252"/>
    </location>
</feature>
<feature type="active site" description="Nucleophile" evidence="1">
    <location>
        <position position="54"/>
    </location>
</feature>
<feature type="binding site" evidence="1">
    <location>
        <position position="113"/>
    </location>
    <ligand>
        <name>substrate</name>
    </ligand>
</feature>
<reference key="1">
    <citation type="journal article" date="2005" name="Science">
        <title>Extensive DNA inversions in the B. fragilis genome control variable gene expression.</title>
        <authorList>
            <person name="Cerdeno-Tarraga A.-M."/>
            <person name="Patrick S."/>
            <person name="Crossman L.C."/>
            <person name="Blakely G."/>
            <person name="Abratt V."/>
            <person name="Lennard N."/>
            <person name="Poxton I."/>
            <person name="Duerden B."/>
            <person name="Harris B."/>
            <person name="Quail M.A."/>
            <person name="Barron A."/>
            <person name="Clark L."/>
            <person name="Corton C."/>
            <person name="Doggett J."/>
            <person name="Holden M.T.G."/>
            <person name="Larke N."/>
            <person name="Line A."/>
            <person name="Lord A."/>
            <person name="Norbertczak H."/>
            <person name="Ormond D."/>
            <person name="Price C."/>
            <person name="Rabbinowitsch E."/>
            <person name="Woodward J."/>
            <person name="Barrell B.G."/>
            <person name="Parkhill J."/>
        </authorList>
    </citation>
    <scope>NUCLEOTIDE SEQUENCE [LARGE SCALE GENOMIC DNA]</scope>
    <source>
        <strain>ATCC 25285 / DSM 2151 / CCUG 4856 / JCM 11019 / LMG 10263 / NCTC 9343 / Onslow / VPI 2553 / EN-2</strain>
    </source>
</reference>
<comment type="function">
    <text evidence="1">Formation of pseudouridine at positions 38, 39 and 40 in the anticodon stem and loop of transfer RNAs.</text>
</comment>
<comment type="catalytic activity">
    <reaction evidence="1">
        <text>uridine(38/39/40) in tRNA = pseudouridine(38/39/40) in tRNA</text>
        <dbReference type="Rhea" id="RHEA:22376"/>
        <dbReference type="Rhea" id="RHEA-COMP:10085"/>
        <dbReference type="Rhea" id="RHEA-COMP:10087"/>
        <dbReference type="ChEBI" id="CHEBI:65314"/>
        <dbReference type="ChEBI" id="CHEBI:65315"/>
        <dbReference type="EC" id="5.4.99.12"/>
    </reaction>
</comment>
<comment type="subunit">
    <text evidence="1">Homodimer.</text>
</comment>
<comment type="similarity">
    <text evidence="1">Belongs to the tRNA pseudouridine synthase TruA family.</text>
</comment>
<name>TRUA_BACFN</name>
<sequence>MSVQRYFIYLAYDGTHYHGWQIQPNGISIQECLMKALATFLRKDTEVIGAGRTDAGVHASLMVAHFDYEGEPLDVDKVAEKLNRLLPQDISVYKVCRVKPDAHARFDATARTYKYYITTVKFPFNRQYRYRIHNPLDFQKMNEAALTLFHYSDFTSFSKLHTDVKTNICKIMHAEWTQEDEYTWVFTIQADRFLRNMVRAIVGTLLEVGRGKLSVDDFRKIIEQQNRCKAGTSAPGNALFLVNVEYPQEIFE</sequence>
<organism>
    <name type="scientific">Bacteroides fragilis (strain ATCC 25285 / DSM 2151 / CCUG 4856 / JCM 11019 / LMG 10263 / NCTC 9343 / Onslow / VPI 2553 / EN-2)</name>
    <dbReference type="NCBI Taxonomy" id="272559"/>
    <lineage>
        <taxon>Bacteria</taxon>
        <taxon>Pseudomonadati</taxon>
        <taxon>Bacteroidota</taxon>
        <taxon>Bacteroidia</taxon>
        <taxon>Bacteroidales</taxon>
        <taxon>Bacteroidaceae</taxon>
        <taxon>Bacteroides</taxon>
    </lineage>
</organism>
<accession>Q5LGZ6</accession>
<dbReference type="EC" id="5.4.99.12" evidence="1"/>
<dbReference type="EMBL" id="CR626927">
    <property type="protein sequence ID" value="CAH06590.1"/>
    <property type="molecule type" value="Genomic_DNA"/>
</dbReference>
<dbReference type="RefSeq" id="WP_005801285.1">
    <property type="nucleotide sequence ID" value="NZ_UFTH01000001.1"/>
</dbReference>
<dbReference type="SMR" id="Q5LGZ6"/>
<dbReference type="PaxDb" id="272559-BF9343_0809"/>
<dbReference type="GeneID" id="60368038"/>
<dbReference type="KEGG" id="bfs:BF9343_0809"/>
<dbReference type="eggNOG" id="COG0101">
    <property type="taxonomic scope" value="Bacteria"/>
</dbReference>
<dbReference type="HOGENOM" id="CLU_014673_0_1_10"/>
<dbReference type="Proteomes" id="UP000006731">
    <property type="component" value="Chromosome"/>
</dbReference>
<dbReference type="GO" id="GO:0003723">
    <property type="term" value="F:RNA binding"/>
    <property type="evidence" value="ECO:0007669"/>
    <property type="project" value="InterPro"/>
</dbReference>
<dbReference type="GO" id="GO:0160147">
    <property type="term" value="F:tRNA pseudouridine(38-40) synthase activity"/>
    <property type="evidence" value="ECO:0007669"/>
    <property type="project" value="UniProtKB-EC"/>
</dbReference>
<dbReference type="GO" id="GO:0031119">
    <property type="term" value="P:tRNA pseudouridine synthesis"/>
    <property type="evidence" value="ECO:0007669"/>
    <property type="project" value="UniProtKB-UniRule"/>
</dbReference>
<dbReference type="CDD" id="cd02570">
    <property type="entry name" value="PseudoU_synth_EcTruA"/>
    <property type="match status" value="1"/>
</dbReference>
<dbReference type="FunFam" id="3.30.70.580:FF:000001">
    <property type="entry name" value="tRNA pseudouridine synthase A"/>
    <property type="match status" value="1"/>
</dbReference>
<dbReference type="Gene3D" id="3.30.70.660">
    <property type="entry name" value="Pseudouridine synthase I, catalytic domain, C-terminal subdomain"/>
    <property type="match status" value="1"/>
</dbReference>
<dbReference type="Gene3D" id="3.30.70.580">
    <property type="entry name" value="Pseudouridine synthase I, catalytic domain, N-terminal subdomain"/>
    <property type="match status" value="1"/>
</dbReference>
<dbReference type="HAMAP" id="MF_00171">
    <property type="entry name" value="TruA"/>
    <property type="match status" value="1"/>
</dbReference>
<dbReference type="InterPro" id="IPR020103">
    <property type="entry name" value="PsdUridine_synth_cat_dom_sf"/>
</dbReference>
<dbReference type="InterPro" id="IPR001406">
    <property type="entry name" value="PsdUridine_synth_TruA"/>
</dbReference>
<dbReference type="InterPro" id="IPR020097">
    <property type="entry name" value="PsdUridine_synth_TruA_a/b_dom"/>
</dbReference>
<dbReference type="InterPro" id="IPR020095">
    <property type="entry name" value="PsdUridine_synth_TruA_C"/>
</dbReference>
<dbReference type="InterPro" id="IPR020094">
    <property type="entry name" value="TruA/RsuA/RluB/E/F_N"/>
</dbReference>
<dbReference type="NCBIfam" id="TIGR00071">
    <property type="entry name" value="hisT_truA"/>
    <property type="match status" value="1"/>
</dbReference>
<dbReference type="PANTHER" id="PTHR11142">
    <property type="entry name" value="PSEUDOURIDYLATE SYNTHASE"/>
    <property type="match status" value="1"/>
</dbReference>
<dbReference type="PANTHER" id="PTHR11142:SF0">
    <property type="entry name" value="TRNA PSEUDOURIDINE SYNTHASE-LIKE 1"/>
    <property type="match status" value="1"/>
</dbReference>
<dbReference type="Pfam" id="PF01416">
    <property type="entry name" value="PseudoU_synth_1"/>
    <property type="match status" value="2"/>
</dbReference>
<dbReference type="PIRSF" id="PIRSF001430">
    <property type="entry name" value="tRNA_psdUrid_synth"/>
    <property type="match status" value="1"/>
</dbReference>
<dbReference type="SUPFAM" id="SSF55120">
    <property type="entry name" value="Pseudouridine synthase"/>
    <property type="match status" value="1"/>
</dbReference>
<gene>
    <name evidence="1" type="primary">truA</name>
    <name type="ordered locus">BF0847</name>
</gene>